<accession>Q7MFY9</accession>
<evidence type="ECO:0000255" key="1">
    <source>
        <dbReference type="HAMAP-Rule" id="MF_01314"/>
    </source>
</evidence>
<dbReference type="EMBL" id="BA000038">
    <property type="protein sequence ID" value="BAC96206.1"/>
    <property type="molecule type" value="Genomic_DNA"/>
</dbReference>
<dbReference type="RefSeq" id="WP_011151603.1">
    <property type="nucleotide sequence ID" value="NC_005140.1"/>
</dbReference>
<dbReference type="SMR" id="Q7MFY9"/>
<dbReference type="KEGG" id="vvy:VVA0180"/>
<dbReference type="PATRIC" id="fig|196600.6.peg.3392"/>
<dbReference type="HOGENOM" id="CLU_000445_125_3_6"/>
<dbReference type="UniPathway" id="UPA00638"/>
<dbReference type="Proteomes" id="UP000002675">
    <property type="component" value="Chromosome II"/>
</dbReference>
<dbReference type="GO" id="GO:0005524">
    <property type="term" value="F:ATP binding"/>
    <property type="evidence" value="ECO:0007669"/>
    <property type="project" value="UniProtKB-UniRule"/>
</dbReference>
<dbReference type="GO" id="GO:0016887">
    <property type="term" value="F:ATP hydrolysis activity"/>
    <property type="evidence" value="ECO:0007669"/>
    <property type="project" value="InterPro"/>
</dbReference>
<dbReference type="GO" id="GO:0003677">
    <property type="term" value="F:DNA binding"/>
    <property type="evidence" value="ECO:0007669"/>
    <property type="project" value="UniProtKB-KW"/>
</dbReference>
<dbReference type="GO" id="GO:0003700">
    <property type="term" value="F:DNA-binding transcription factor activity"/>
    <property type="evidence" value="ECO:0007669"/>
    <property type="project" value="UniProtKB-UniRule"/>
</dbReference>
<dbReference type="GO" id="GO:0000160">
    <property type="term" value="P:phosphorelay signal transduction system"/>
    <property type="evidence" value="ECO:0007669"/>
    <property type="project" value="UniProtKB-UniRule"/>
</dbReference>
<dbReference type="CDD" id="cd00009">
    <property type="entry name" value="AAA"/>
    <property type="match status" value="1"/>
</dbReference>
<dbReference type="FunFam" id="3.40.50.300:FF:000006">
    <property type="entry name" value="DNA-binding transcriptional regulator NtrC"/>
    <property type="match status" value="1"/>
</dbReference>
<dbReference type="Gene3D" id="1.10.8.60">
    <property type="match status" value="1"/>
</dbReference>
<dbReference type="Gene3D" id="3.30.450.40">
    <property type="match status" value="1"/>
</dbReference>
<dbReference type="Gene3D" id="1.10.10.60">
    <property type="entry name" value="Homeodomain-like"/>
    <property type="match status" value="1"/>
</dbReference>
<dbReference type="Gene3D" id="3.40.50.300">
    <property type="entry name" value="P-loop containing nucleotide triphosphate hydrolases"/>
    <property type="match status" value="1"/>
</dbReference>
<dbReference type="HAMAP" id="MF_01314">
    <property type="entry name" value="NorR"/>
    <property type="match status" value="1"/>
</dbReference>
<dbReference type="InterPro" id="IPR003593">
    <property type="entry name" value="AAA+_ATPase"/>
</dbReference>
<dbReference type="InterPro" id="IPR003018">
    <property type="entry name" value="GAF"/>
</dbReference>
<dbReference type="InterPro" id="IPR029016">
    <property type="entry name" value="GAF-like_dom_sf"/>
</dbReference>
<dbReference type="InterPro" id="IPR009057">
    <property type="entry name" value="Homeodomain-like_sf"/>
</dbReference>
<dbReference type="InterPro" id="IPR023944">
    <property type="entry name" value="NorR"/>
</dbReference>
<dbReference type="InterPro" id="IPR027417">
    <property type="entry name" value="P-loop_NTPase"/>
</dbReference>
<dbReference type="InterPro" id="IPR002078">
    <property type="entry name" value="Sigma_54_int"/>
</dbReference>
<dbReference type="InterPro" id="IPR025662">
    <property type="entry name" value="Sigma_54_int_dom_ATP-bd_1"/>
</dbReference>
<dbReference type="InterPro" id="IPR025943">
    <property type="entry name" value="Sigma_54_int_dom_ATP-bd_2"/>
</dbReference>
<dbReference type="InterPro" id="IPR025944">
    <property type="entry name" value="Sigma_54_int_dom_CS"/>
</dbReference>
<dbReference type="NCBIfam" id="NF003451">
    <property type="entry name" value="PRK05022.1"/>
    <property type="match status" value="1"/>
</dbReference>
<dbReference type="PANTHER" id="PTHR32071:SF35">
    <property type="entry name" value="ANAEROBIC NITRIC OXIDE REDUCTASE TRANSCRIPTION REGULATOR NORR"/>
    <property type="match status" value="1"/>
</dbReference>
<dbReference type="PANTHER" id="PTHR32071">
    <property type="entry name" value="TRANSCRIPTIONAL REGULATORY PROTEIN"/>
    <property type="match status" value="1"/>
</dbReference>
<dbReference type="Pfam" id="PF01590">
    <property type="entry name" value="GAF"/>
    <property type="match status" value="1"/>
</dbReference>
<dbReference type="Pfam" id="PF00158">
    <property type="entry name" value="Sigma54_activat"/>
    <property type="match status" value="1"/>
</dbReference>
<dbReference type="SMART" id="SM00382">
    <property type="entry name" value="AAA"/>
    <property type="match status" value="1"/>
</dbReference>
<dbReference type="SMART" id="SM00065">
    <property type="entry name" value="GAF"/>
    <property type="match status" value="1"/>
</dbReference>
<dbReference type="SUPFAM" id="SSF55781">
    <property type="entry name" value="GAF domain-like"/>
    <property type="match status" value="1"/>
</dbReference>
<dbReference type="SUPFAM" id="SSF46689">
    <property type="entry name" value="Homeodomain-like"/>
    <property type="match status" value="1"/>
</dbReference>
<dbReference type="SUPFAM" id="SSF52540">
    <property type="entry name" value="P-loop containing nucleoside triphosphate hydrolases"/>
    <property type="match status" value="1"/>
</dbReference>
<dbReference type="PROSITE" id="PS00675">
    <property type="entry name" value="SIGMA54_INTERACT_1"/>
    <property type="match status" value="1"/>
</dbReference>
<dbReference type="PROSITE" id="PS00676">
    <property type="entry name" value="SIGMA54_INTERACT_2"/>
    <property type="match status" value="1"/>
</dbReference>
<dbReference type="PROSITE" id="PS00688">
    <property type="entry name" value="SIGMA54_INTERACT_3"/>
    <property type="match status" value="1"/>
</dbReference>
<dbReference type="PROSITE" id="PS50045">
    <property type="entry name" value="SIGMA54_INTERACT_4"/>
    <property type="match status" value="1"/>
</dbReference>
<gene>
    <name evidence="1" type="primary">norR</name>
    <name type="ordered locus">VVA0180</name>
</gene>
<comment type="function">
    <text evidence="1">Required for the expression of anaerobic nitric oxide (NO) reductase, acts as a transcriptional activator for at least the norVW operon. Activation also requires sigma-54.</text>
</comment>
<comment type="pathway">
    <text evidence="1">Nitrogen metabolism; nitric oxide reduction.</text>
</comment>
<sequence>MTSLIAQWLHITQDLNSALTRQARFDTLLTTIRDVLNCDSSALLLFEDQHFKPLAINGLAKEVLGRRFSIEQHPRLEAIARAGDIVRFPSESTLPDPYDGLITNHQGKLHVHSCIGLPLLIDDQLIGAITIDALDPNQFDQLKNQELRFISALAAGGLHTALLLEQLETQASLPRESYAEKRTLSNEIIGNSQGMRTLQEQIDAVANTELSVLVMGETGVGKELVANAIHHRSDRASNNLVYLNCAALPESVAESELFGHIKGAFTGAISHRKGKFEQADGGTLFLDEVGELSLELQAKLLRALQYGDIQRVGDDRHIRVNTRIVAATNRVLHEEVKAGRFRADLYHRLSVFPLHVPPLREREEDVILLAGFFAEQVRGKLGLHSVRLSPSLVAELREYHWPGNVRELEHVIKRAAVLAKARTPQMDIELISQDFDIKTPTSPMMPTVAASQAQHEIHVDIGLKQATDAFQKQLILRALESNQGNWAATARQLELDSGNLHRLAKRLGIK</sequence>
<organism>
    <name type="scientific">Vibrio vulnificus (strain YJ016)</name>
    <dbReference type="NCBI Taxonomy" id="196600"/>
    <lineage>
        <taxon>Bacteria</taxon>
        <taxon>Pseudomonadati</taxon>
        <taxon>Pseudomonadota</taxon>
        <taxon>Gammaproteobacteria</taxon>
        <taxon>Vibrionales</taxon>
        <taxon>Vibrionaceae</taxon>
        <taxon>Vibrio</taxon>
    </lineage>
</organism>
<keyword id="KW-0067">ATP-binding</keyword>
<keyword id="KW-0238">DNA-binding</keyword>
<keyword id="KW-0547">Nucleotide-binding</keyword>
<keyword id="KW-0804">Transcription</keyword>
<keyword id="KW-0805">Transcription regulation</keyword>
<name>NORR_VIBVY</name>
<protein>
    <recommendedName>
        <fullName evidence="1">Anaerobic nitric oxide reductase transcription regulator NorR</fullName>
    </recommendedName>
</protein>
<proteinExistence type="inferred from homology"/>
<feature type="chain" id="PRO_0000081160" description="Anaerobic nitric oxide reductase transcription regulator NorR">
    <location>
        <begin position="1"/>
        <end position="510"/>
    </location>
</feature>
<feature type="domain" description="Sigma-54 factor interaction" evidence="1">
    <location>
        <begin position="188"/>
        <end position="417"/>
    </location>
</feature>
<feature type="DNA-binding region" description="H-T-H motif" evidence="1">
    <location>
        <begin position="486"/>
        <end position="505"/>
    </location>
</feature>
<feature type="binding site" evidence="1">
    <location>
        <begin position="216"/>
        <end position="223"/>
    </location>
    <ligand>
        <name>ATP</name>
        <dbReference type="ChEBI" id="CHEBI:30616"/>
    </ligand>
</feature>
<feature type="binding site" evidence="1">
    <location>
        <begin position="279"/>
        <end position="288"/>
    </location>
    <ligand>
        <name>ATP</name>
        <dbReference type="ChEBI" id="CHEBI:30616"/>
    </ligand>
</feature>
<reference key="1">
    <citation type="journal article" date="2003" name="Genome Res.">
        <title>Comparative genome analysis of Vibrio vulnificus, a marine pathogen.</title>
        <authorList>
            <person name="Chen C.-Y."/>
            <person name="Wu K.-M."/>
            <person name="Chang Y.-C."/>
            <person name="Chang C.-H."/>
            <person name="Tsai H.-C."/>
            <person name="Liao T.-L."/>
            <person name="Liu Y.-M."/>
            <person name="Chen H.-J."/>
            <person name="Shen A.B.-T."/>
            <person name="Li J.-C."/>
            <person name="Su T.-L."/>
            <person name="Shao C.-P."/>
            <person name="Lee C.-T."/>
            <person name="Hor L.-I."/>
            <person name="Tsai S.-F."/>
        </authorList>
    </citation>
    <scope>NUCLEOTIDE SEQUENCE [LARGE SCALE GENOMIC DNA]</scope>
    <source>
        <strain>YJ016</strain>
    </source>
</reference>